<proteinExistence type="inferred from homology"/>
<gene>
    <name evidence="1" type="primary">cysS</name>
    <name type="ordered locus">SPA2186</name>
</gene>
<accession>Q5PCE2</accession>
<feature type="chain" id="PRO_0000159471" description="Cysteine--tRNA ligase">
    <location>
        <begin position="1"/>
        <end position="461"/>
    </location>
</feature>
<feature type="short sequence motif" description="'HIGH' region">
    <location>
        <begin position="30"/>
        <end position="40"/>
    </location>
</feature>
<feature type="short sequence motif" description="'KMSKS' region">
    <location>
        <begin position="266"/>
        <end position="270"/>
    </location>
</feature>
<feature type="binding site" evidence="1">
    <location>
        <position position="28"/>
    </location>
    <ligand>
        <name>Zn(2+)</name>
        <dbReference type="ChEBI" id="CHEBI:29105"/>
    </ligand>
</feature>
<feature type="binding site" evidence="1">
    <location>
        <position position="209"/>
    </location>
    <ligand>
        <name>Zn(2+)</name>
        <dbReference type="ChEBI" id="CHEBI:29105"/>
    </ligand>
</feature>
<feature type="binding site" evidence="1">
    <location>
        <position position="234"/>
    </location>
    <ligand>
        <name>Zn(2+)</name>
        <dbReference type="ChEBI" id="CHEBI:29105"/>
    </ligand>
</feature>
<feature type="binding site" evidence="1">
    <location>
        <position position="238"/>
    </location>
    <ligand>
        <name>Zn(2+)</name>
        <dbReference type="ChEBI" id="CHEBI:29105"/>
    </ligand>
</feature>
<feature type="binding site" evidence="1">
    <location>
        <position position="269"/>
    </location>
    <ligand>
        <name>ATP</name>
        <dbReference type="ChEBI" id="CHEBI:30616"/>
    </ligand>
</feature>
<dbReference type="EC" id="6.1.1.16" evidence="1"/>
<dbReference type="EMBL" id="CP000026">
    <property type="protein sequence ID" value="AAV78075.1"/>
    <property type="molecule type" value="Genomic_DNA"/>
</dbReference>
<dbReference type="RefSeq" id="WP_000912377.1">
    <property type="nucleotide sequence ID" value="NC_006511.1"/>
</dbReference>
<dbReference type="SMR" id="Q5PCE2"/>
<dbReference type="KEGG" id="spt:SPA2186"/>
<dbReference type="HOGENOM" id="CLU_013528_0_1_6"/>
<dbReference type="Proteomes" id="UP000008185">
    <property type="component" value="Chromosome"/>
</dbReference>
<dbReference type="GO" id="GO:0005829">
    <property type="term" value="C:cytosol"/>
    <property type="evidence" value="ECO:0007669"/>
    <property type="project" value="TreeGrafter"/>
</dbReference>
<dbReference type="GO" id="GO:0005524">
    <property type="term" value="F:ATP binding"/>
    <property type="evidence" value="ECO:0007669"/>
    <property type="project" value="UniProtKB-UniRule"/>
</dbReference>
<dbReference type="GO" id="GO:0004817">
    <property type="term" value="F:cysteine-tRNA ligase activity"/>
    <property type="evidence" value="ECO:0007669"/>
    <property type="project" value="UniProtKB-UniRule"/>
</dbReference>
<dbReference type="GO" id="GO:0008270">
    <property type="term" value="F:zinc ion binding"/>
    <property type="evidence" value="ECO:0007669"/>
    <property type="project" value="UniProtKB-UniRule"/>
</dbReference>
<dbReference type="GO" id="GO:0006423">
    <property type="term" value="P:cysteinyl-tRNA aminoacylation"/>
    <property type="evidence" value="ECO:0007669"/>
    <property type="project" value="UniProtKB-UniRule"/>
</dbReference>
<dbReference type="CDD" id="cd07963">
    <property type="entry name" value="Anticodon_Ia_Cys"/>
    <property type="match status" value="1"/>
</dbReference>
<dbReference type="CDD" id="cd00672">
    <property type="entry name" value="CysRS_core"/>
    <property type="match status" value="1"/>
</dbReference>
<dbReference type="FunFam" id="1.20.120.1910:FF:000001">
    <property type="entry name" value="Cysteine--tRNA ligase"/>
    <property type="match status" value="1"/>
</dbReference>
<dbReference type="FunFam" id="3.40.50.620:FF:000009">
    <property type="entry name" value="Cysteine--tRNA ligase"/>
    <property type="match status" value="1"/>
</dbReference>
<dbReference type="Gene3D" id="1.20.120.1910">
    <property type="entry name" value="Cysteine-tRNA ligase, C-terminal anti-codon recognition domain"/>
    <property type="match status" value="1"/>
</dbReference>
<dbReference type="Gene3D" id="3.40.50.620">
    <property type="entry name" value="HUPs"/>
    <property type="match status" value="1"/>
</dbReference>
<dbReference type="HAMAP" id="MF_00041">
    <property type="entry name" value="Cys_tRNA_synth"/>
    <property type="match status" value="1"/>
</dbReference>
<dbReference type="InterPro" id="IPR015803">
    <property type="entry name" value="Cys-tRNA-ligase"/>
</dbReference>
<dbReference type="InterPro" id="IPR015273">
    <property type="entry name" value="Cys-tRNA-synt_Ia_DALR"/>
</dbReference>
<dbReference type="InterPro" id="IPR024909">
    <property type="entry name" value="Cys-tRNA/MSH_ligase"/>
</dbReference>
<dbReference type="InterPro" id="IPR056411">
    <property type="entry name" value="CysS_C"/>
</dbReference>
<dbReference type="InterPro" id="IPR014729">
    <property type="entry name" value="Rossmann-like_a/b/a_fold"/>
</dbReference>
<dbReference type="InterPro" id="IPR032678">
    <property type="entry name" value="tRNA-synt_1_cat_dom"/>
</dbReference>
<dbReference type="InterPro" id="IPR009080">
    <property type="entry name" value="tRNAsynth_Ia_anticodon-bd"/>
</dbReference>
<dbReference type="NCBIfam" id="TIGR00435">
    <property type="entry name" value="cysS"/>
    <property type="match status" value="1"/>
</dbReference>
<dbReference type="PANTHER" id="PTHR10890:SF3">
    <property type="entry name" value="CYSTEINE--TRNA LIGASE, CYTOPLASMIC"/>
    <property type="match status" value="1"/>
</dbReference>
<dbReference type="PANTHER" id="PTHR10890">
    <property type="entry name" value="CYSTEINYL-TRNA SYNTHETASE"/>
    <property type="match status" value="1"/>
</dbReference>
<dbReference type="Pfam" id="PF23493">
    <property type="entry name" value="CysS_C"/>
    <property type="match status" value="1"/>
</dbReference>
<dbReference type="Pfam" id="PF09190">
    <property type="entry name" value="DALR_2"/>
    <property type="match status" value="1"/>
</dbReference>
<dbReference type="Pfam" id="PF01406">
    <property type="entry name" value="tRNA-synt_1e"/>
    <property type="match status" value="1"/>
</dbReference>
<dbReference type="PRINTS" id="PR00983">
    <property type="entry name" value="TRNASYNTHCYS"/>
</dbReference>
<dbReference type="SMART" id="SM00840">
    <property type="entry name" value="DALR_2"/>
    <property type="match status" value="1"/>
</dbReference>
<dbReference type="SUPFAM" id="SSF47323">
    <property type="entry name" value="Anticodon-binding domain of a subclass of class I aminoacyl-tRNA synthetases"/>
    <property type="match status" value="1"/>
</dbReference>
<dbReference type="SUPFAM" id="SSF52374">
    <property type="entry name" value="Nucleotidylyl transferase"/>
    <property type="match status" value="1"/>
</dbReference>
<comment type="catalytic activity">
    <reaction evidence="1">
        <text>tRNA(Cys) + L-cysteine + ATP = L-cysteinyl-tRNA(Cys) + AMP + diphosphate</text>
        <dbReference type="Rhea" id="RHEA:17773"/>
        <dbReference type="Rhea" id="RHEA-COMP:9661"/>
        <dbReference type="Rhea" id="RHEA-COMP:9679"/>
        <dbReference type="ChEBI" id="CHEBI:30616"/>
        <dbReference type="ChEBI" id="CHEBI:33019"/>
        <dbReference type="ChEBI" id="CHEBI:35235"/>
        <dbReference type="ChEBI" id="CHEBI:78442"/>
        <dbReference type="ChEBI" id="CHEBI:78517"/>
        <dbReference type="ChEBI" id="CHEBI:456215"/>
        <dbReference type="EC" id="6.1.1.16"/>
    </reaction>
</comment>
<comment type="cofactor">
    <cofactor evidence="1">
        <name>Zn(2+)</name>
        <dbReference type="ChEBI" id="CHEBI:29105"/>
    </cofactor>
    <text evidence="1">Binds 1 zinc ion per subunit.</text>
</comment>
<comment type="subunit">
    <text evidence="1">Monomer.</text>
</comment>
<comment type="subcellular location">
    <subcellularLocation>
        <location evidence="1">Cytoplasm</location>
    </subcellularLocation>
</comment>
<comment type="similarity">
    <text evidence="1">Belongs to the class-I aminoacyl-tRNA synthetase family.</text>
</comment>
<protein>
    <recommendedName>
        <fullName evidence="1">Cysteine--tRNA ligase</fullName>
        <ecNumber evidence="1">6.1.1.16</ecNumber>
    </recommendedName>
    <alternativeName>
        <fullName evidence="1">Cysteinyl-tRNA synthetase</fullName>
        <shortName evidence="1">CysRS</shortName>
    </alternativeName>
</protein>
<evidence type="ECO:0000255" key="1">
    <source>
        <dbReference type="HAMAP-Rule" id="MF_00041"/>
    </source>
</evidence>
<reference key="1">
    <citation type="journal article" date="2004" name="Nat. Genet.">
        <title>Comparison of genome degradation in Paratyphi A and Typhi, human-restricted serovars of Salmonella enterica that cause typhoid.</title>
        <authorList>
            <person name="McClelland M."/>
            <person name="Sanderson K.E."/>
            <person name="Clifton S.W."/>
            <person name="Latreille P."/>
            <person name="Porwollik S."/>
            <person name="Sabo A."/>
            <person name="Meyer R."/>
            <person name="Bieri T."/>
            <person name="Ozersky P."/>
            <person name="McLellan M."/>
            <person name="Harkins C.R."/>
            <person name="Wang C."/>
            <person name="Nguyen C."/>
            <person name="Berghoff A."/>
            <person name="Elliott G."/>
            <person name="Kohlberg S."/>
            <person name="Strong C."/>
            <person name="Du F."/>
            <person name="Carter J."/>
            <person name="Kremizki C."/>
            <person name="Layman D."/>
            <person name="Leonard S."/>
            <person name="Sun H."/>
            <person name="Fulton L."/>
            <person name="Nash W."/>
            <person name="Miner T."/>
            <person name="Minx P."/>
            <person name="Delehaunty K."/>
            <person name="Fronick C."/>
            <person name="Magrini V."/>
            <person name="Nhan M."/>
            <person name="Warren W."/>
            <person name="Florea L."/>
            <person name="Spieth J."/>
            <person name="Wilson R.K."/>
        </authorList>
    </citation>
    <scope>NUCLEOTIDE SEQUENCE [LARGE SCALE GENOMIC DNA]</scope>
    <source>
        <strain>ATCC 9150 / SARB42</strain>
    </source>
</reference>
<keyword id="KW-0030">Aminoacyl-tRNA synthetase</keyword>
<keyword id="KW-0067">ATP-binding</keyword>
<keyword id="KW-0963">Cytoplasm</keyword>
<keyword id="KW-0436">Ligase</keyword>
<keyword id="KW-0479">Metal-binding</keyword>
<keyword id="KW-0547">Nucleotide-binding</keyword>
<keyword id="KW-0648">Protein biosynthesis</keyword>
<keyword id="KW-0862">Zinc</keyword>
<name>SYC_SALPA</name>
<sequence length="461" mass="52287">MLKIFNTLTRQKEEFKPIHAGEVGMYVCGITVYDLCHIGHGRTFVAFDVVARYLRFLGYKLKYVRNITDIDDKIIKRANENGESFVALVDRMIAEMHQDFDALNILRPDSEPRATHHIQEIIELTRTLIEKGHAYVADNGDVMFDVPTDPTYGQLSRQDLEQLQAGARVDVVDVKRNPMDFVLWKMSKEGEPSWPSPWGEGRPGWHIECSAMNCKQLGNHFDIHGGGSDLMFPHHENEIAQSTCAHDGEYVNYWMHSGMVMVDREKMSKSLGNFFTVRDVLKYYDAETVRYFLMSGHYRSQLNYSEENLKQARASLERLYTALRGTDKSAAPAGGEAFEARFVEAMNDDFNTPEAYSVLFDMAREVNRLKGEDMTAANAMASHLRKISGVLGLLEQEPDVFLQSGAQADDGEVAEIEALIQQRLDARKAKDWAAADAARDRLTEMGIILEDGPQGTTWRRK</sequence>
<organism>
    <name type="scientific">Salmonella paratyphi A (strain ATCC 9150 / SARB42)</name>
    <dbReference type="NCBI Taxonomy" id="295319"/>
    <lineage>
        <taxon>Bacteria</taxon>
        <taxon>Pseudomonadati</taxon>
        <taxon>Pseudomonadota</taxon>
        <taxon>Gammaproteobacteria</taxon>
        <taxon>Enterobacterales</taxon>
        <taxon>Enterobacteriaceae</taxon>
        <taxon>Salmonella</taxon>
    </lineage>
</organism>